<proteinExistence type="inferred from homology"/>
<organism>
    <name type="scientific">Aythya americana</name>
    <name type="common">Redhead</name>
    <dbReference type="NCBI Taxonomy" id="30385"/>
    <lineage>
        <taxon>Eukaryota</taxon>
        <taxon>Metazoa</taxon>
        <taxon>Chordata</taxon>
        <taxon>Craniata</taxon>
        <taxon>Vertebrata</taxon>
        <taxon>Euteleostomi</taxon>
        <taxon>Archelosauria</taxon>
        <taxon>Archosauria</taxon>
        <taxon>Dinosauria</taxon>
        <taxon>Saurischia</taxon>
        <taxon>Theropoda</taxon>
        <taxon>Coelurosauria</taxon>
        <taxon>Aves</taxon>
        <taxon>Neognathae</taxon>
        <taxon>Galloanserae</taxon>
        <taxon>Anseriformes</taxon>
        <taxon>Anatidae</taxon>
        <taxon>Aythyinae</taxon>
        <taxon>Aythya</taxon>
    </lineage>
</organism>
<accession>Q9XKZ5</accession>
<keyword id="KW-0066">ATP synthesis</keyword>
<keyword id="KW-0138">CF(0)</keyword>
<keyword id="KW-0375">Hydrogen ion transport</keyword>
<keyword id="KW-0406">Ion transport</keyword>
<keyword id="KW-0472">Membrane</keyword>
<keyword id="KW-0496">Mitochondrion</keyword>
<keyword id="KW-0812">Transmembrane</keyword>
<keyword id="KW-1133">Transmembrane helix</keyword>
<keyword id="KW-0813">Transport</keyword>
<sequence length="55" mass="6295">MPQLNPAPWFSIMIMTWLTLALLIQPKLLTFTTTNPPSSKPSLTTKPTPWAWPWT</sequence>
<evidence type="ECO:0000250" key="1">
    <source>
        <dbReference type="UniProtKB" id="P03928"/>
    </source>
</evidence>
<evidence type="ECO:0000250" key="2">
    <source>
        <dbReference type="UniProtKB" id="P19483"/>
    </source>
</evidence>
<evidence type="ECO:0000255" key="3"/>
<evidence type="ECO:0000256" key="4">
    <source>
        <dbReference type="SAM" id="MobiDB-lite"/>
    </source>
</evidence>
<evidence type="ECO:0000305" key="5"/>
<geneLocation type="mitochondrion"/>
<reference key="1">
    <citation type="journal article" date="1999" name="Syst. Biol.">
        <title>Interordinal relationships of birds and other reptiles based on whole mitochondrial genomes.</title>
        <authorList>
            <person name="Mindell D.P."/>
            <person name="Sorenson M.D."/>
            <person name="Dimcheff D.E."/>
            <person name="Hasegawa M."/>
            <person name="Ast J.C."/>
            <person name="Yuri T."/>
        </authorList>
    </citation>
    <scope>NUCLEOTIDE SEQUENCE [GENOMIC DNA]</scope>
</reference>
<dbReference type="EMBL" id="AF090337">
    <property type="protein sequence ID" value="AAD32256.1"/>
    <property type="molecule type" value="Genomic_DNA"/>
</dbReference>
<dbReference type="PIR" id="T11026">
    <property type="entry name" value="T11026"/>
</dbReference>
<dbReference type="RefSeq" id="NP_008703.1">
    <property type="nucleotide sequence ID" value="NC_000877.1"/>
</dbReference>
<dbReference type="SMR" id="Q9XKZ5"/>
<dbReference type="GeneID" id="808583"/>
<dbReference type="CTD" id="4509"/>
<dbReference type="GO" id="GO:0031966">
    <property type="term" value="C:mitochondrial membrane"/>
    <property type="evidence" value="ECO:0007669"/>
    <property type="project" value="UniProtKB-SubCell"/>
</dbReference>
<dbReference type="GO" id="GO:0045259">
    <property type="term" value="C:proton-transporting ATP synthase complex"/>
    <property type="evidence" value="ECO:0007669"/>
    <property type="project" value="UniProtKB-KW"/>
</dbReference>
<dbReference type="GO" id="GO:0015078">
    <property type="term" value="F:proton transmembrane transporter activity"/>
    <property type="evidence" value="ECO:0007669"/>
    <property type="project" value="InterPro"/>
</dbReference>
<dbReference type="GO" id="GO:0015986">
    <property type="term" value="P:proton motive force-driven ATP synthesis"/>
    <property type="evidence" value="ECO:0007669"/>
    <property type="project" value="InterPro"/>
</dbReference>
<dbReference type="InterPro" id="IPR001421">
    <property type="entry name" value="ATP8_metazoa"/>
</dbReference>
<dbReference type="InterPro" id="IPR050635">
    <property type="entry name" value="ATPase_protein_8"/>
</dbReference>
<dbReference type="PANTHER" id="PTHR39937">
    <property type="entry name" value="ATP SYNTHASE PROTEIN 8"/>
    <property type="match status" value="1"/>
</dbReference>
<dbReference type="PANTHER" id="PTHR39937:SF1">
    <property type="entry name" value="ATP SYNTHASE PROTEIN 8"/>
    <property type="match status" value="1"/>
</dbReference>
<dbReference type="Pfam" id="PF00895">
    <property type="entry name" value="ATP-synt_8"/>
    <property type="match status" value="1"/>
</dbReference>
<gene>
    <name evidence="1" type="primary">MT-ATP8</name>
    <name type="synonym">ATP8</name>
    <name type="synonym">ATPASE8</name>
    <name type="synonym">MTATP8</name>
</gene>
<protein>
    <recommendedName>
        <fullName evidence="1">ATP synthase F(0) complex subunit 8</fullName>
    </recommendedName>
    <alternativeName>
        <fullName>A6L</fullName>
    </alternativeName>
    <alternativeName>
        <fullName>F-ATPase subunit 8</fullName>
    </alternativeName>
</protein>
<feature type="chain" id="PRO_0000195491" description="ATP synthase F(0) complex subunit 8">
    <location>
        <begin position="1"/>
        <end position="55"/>
    </location>
</feature>
<feature type="transmembrane region" description="Helical" evidence="3">
    <location>
        <begin position="7"/>
        <end position="24"/>
    </location>
</feature>
<feature type="region of interest" description="Disordered" evidence="4">
    <location>
        <begin position="34"/>
        <end position="55"/>
    </location>
</feature>
<name>ATP8_AYTAM</name>
<comment type="function">
    <text evidence="1 2">Subunit 8, of the mitochondrial membrane ATP synthase complex (F(1)F(0) ATP synthase or Complex V) that produces ATP from ADP in the presence of a proton gradient across the membrane which is generated by electron transport complexes of the respiratory chain. ATP synthase complex consist of a soluble F(1) head domain - the catalytic core - and a membrane F(1) domain - the membrane proton channel. These two domains are linked by a central stalk rotating inside the F(1) region and a stationary peripheral stalk. During catalysis, ATP synthesis in the catalytic domain of F(1) is coupled via a rotary mechanism of the central stalk subunits to proton translocation (By similarity). In vivo, can only synthesize ATP although its ATP hydrolase activity can be activated artificially in vitro (By similarity). Part of the complex F(0) domain (By similarity).</text>
</comment>
<comment type="subunit">
    <text evidence="1">Component of the ATP synthase complex composed at least of ATP5F1A/subunit alpha, ATP5F1B/subunit beta, ATP5MC1/subunit c (homooctomer), MT-ATP6/subunit a, MT-ATP8/subunit 8, ATP5ME/subunit e, ATP5MF/subunit f, ATP5MG/subunit g, ATP5MK/subunit k, ATP5MJ/subunit j, ATP5F1C/subunit gamma, ATP5F1D/subunit delta, ATP5F1E/subunit epsilon, ATP5PF/subunit F6, ATP5PB/subunit b, ATP5PD/subunit d, ATP5PO/subunit OSCP. ATP synthase complex consists of a soluble F(1) head domain (subunits alpha(3) and beta(3)) - the catalytic core - and a membrane F(0) domain - the membrane proton channel (subunits c, a, 8, e, f, g, k and j). These two domains are linked by a central stalk (subunits gamma, delta, and epsilon) rotating inside the F1 region and a stationary peripheral stalk (subunits F6, b, d, and OSCP).</text>
</comment>
<comment type="subcellular location">
    <subcellularLocation>
        <location>Mitochondrion membrane</location>
        <topology>Single-pass membrane protein</topology>
    </subcellularLocation>
</comment>
<comment type="similarity">
    <text evidence="5">Belongs to the ATPase protein 8 family.</text>
</comment>